<accession>P51712</accession>
<proteinExistence type="predicted"/>
<comment type="subcellular location">
    <subcellularLocation>
        <location evidence="2">Host membrane</location>
        <topology evidence="2">Single-pass membrane protein</topology>
    </subcellularLocation>
</comment>
<organism>
    <name type="scientific">Haemophilus phage HP1 (strain HP1c1)</name>
    <name type="common">Bacteriophage HP1</name>
    <dbReference type="NCBI Taxonomy" id="1289570"/>
    <lineage>
        <taxon>Viruses</taxon>
        <taxon>Duplodnaviria</taxon>
        <taxon>Heunggongvirae</taxon>
        <taxon>Uroviricota</taxon>
        <taxon>Caudoviricetes</taxon>
        <taxon>Peduoviridae</taxon>
        <taxon>Hpunavirus</taxon>
        <taxon>Haemophilus phage HP1</taxon>
    </lineage>
</organism>
<sequence>MNKRKQKQISRILAAKRAEKCGQINAELQETGEYLEGRVHLLRAKLSINGINLKAYVLEQVINIKHQIVTERFGNVLLGLASGMIGGIIGMFMWVLCIL</sequence>
<protein>
    <recommendedName>
        <fullName>Uncharacterized 11.1 kDa protein in rep-hol intergenic region</fullName>
    </recommendedName>
    <alternativeName>
        <fullName>ORF10</fullName>
    </alternativeName>
</protein>
<name>YO10_BPHC1</name>
<reference key="1">
    <citation type="journal article" date="1996" name="Nucleic Acids Res.">
        <title>The complete nucleotide sequence of bacteriophage HP1 DNA.</title>
        <authorList>
            <person name="Esposito D."/>
            <person name="Fitzmaurice W.P."/>
            <person name="Benjamin R.C."/>
            <person name="Goodman S.D."/>
            <person name="Waldman A.S."/>
            <person name="Scocca J.J."/>
        </authorList>
    </citation>
    <scope>NUCLEOTIDE SEQUENCE [LARGE SCALE GENOMIC DNA]</scope>
</reference>
<organismHost>
    <name type="scientific">Haemophilus influenzae</name>
    <dbReference type="NCBI Taxonomy" id="727"/>
</organismHost>
<dbReference type="EMBL" id="U24159">
    <property type="protein sequence ID" value="AAB09195.1"/>
    <property type="molecule type" value="Genomic_DNA"/>
</dbReference>
<dbReference type="PIR" id="S69516">
    <property type="entry name" value="S69516"/>
</dbReference>
<dbReference type="RefSeq" id="NP_043479.1">
    <property type="nucleotide sequence ID" value="NC_001697.1"/>
</dbReference>
<dbReference type="GeneID" id="1261134"/>
<dbReference type="KEGG" id="vg:1261134"/>
<dbReference type="Proteomes" id="UP000001713">
    <property type="component" value="Segment"/>
</dbReference>
<dbReference type="GO" id="GO:0033644">
    <property type="term" value="C:host cell membrane"/>
    <property type="evidence" value="ECO:0007669"/>
    <property type="project" value="UniProtKB-SubCell"/>
</dbReference>
<dbReference type="GO" id="GO:0016020">
    <property type="term" value="C:membrane"/>
    <property type="evidence" value="ECO:0007669"/>
    <property type="project" value="UniProtKB-KW"/>
</dbReference>
<feature type="chain" id="PRO_0000165327" description="Uncharacterized 11.1 kDa protein in rep-hol intergenic region">
    <location>
        <begin position="1"/>
        <end position="99"/>
    </location>
</feature>
<feature type="transmembrane region" description="Helical" evidence="1">
    <location>
        <begin position="76"/>
        <end position="96"/>
    </location>
</feature>
<keyword id="KW-1043">Host membrane</keyword>
<keyword id="KW-0472">Membrane</keyword>
<keyword id="KW-1185">Reference proteome</keyword>
<keyword id="KW-0812">Transmembrane</keyword>
<keyword id="KW-1133">Transmembrane helix</keyword>
<evidence type="ECO:0000255" key="1"/>
<evidence type="ECO:0000305" key="2"/>